<keyword id="KW-1003">Cell membrane</keyword>
<keyword id="KW-0472">Membrane</keyword>
<keyword id="KW-0812">Transmembrane</keyword>
<keyword id="KW-1133">Transmembrane helix</keyword>
<keyword id="KW-0813">Transport</keyword>
<proteinExistence type="inferred from homology"/>
<organism>
    <name type="scientific">Listeria monocytogenes</name>
    <dbReference type="NCBI Taxonomy" id="1639"/>
    <lineage>
        <taxon>Bacteria</taxon>
        <taxon>Bacillati</taxon>
        <taxon>Bacillota</taxon>
        <taxon>Bacilli</taxon>
        <taxon>Bacillales</taxon>
        <taxon>Listeriaceae</taxon>
        <taxon>Listeria</taxon>
    </lineage>
</organism>
<sequence>MSKIRQLLNKIPWYTDQVHSIFMYLIMGGFTTIINIVTFWLCTYILNWDYRIANTIAFIASVLFAYFSNKKFVFDSYTPTWKDRLREASSFFGFRCLTYIIDILVMILLISYLSVDELWAKIWTNIIVLVLNYVFSKWIIFKVQK</sequence>
<dbReference type="EMBL" id="AF072894">
    <property type="protein sequence ID" value="AAD09998.1"/>
    <property type="molecule type" value="Genomic_DNA"/>
</dbReference>
<dbReference type="RefSeq" id="WP_003734485.1">
    <property type="nucleotide sequence ID" value="NZ_WUDT01000007.1"/>
</dbReference>
<dbReference type="SMR" id="Q9ZH29"/>
<dbReference type="eggNOG" id="COG2246">
    <property type="taxonomic scope" value="Bacteria"/>
</dbReference>
<dbReference type="OMA" id="FFTNDIF"/>
<dbReference type="PHI-base" id="PHI:6145"/>
<dbReference type="GO" id="GO:0005886">
    <property type="term" value="C:plasma membrane"/>
    <property type="evidence" value="ECO:0007669"/>
    <property type="project" value="UniProtKB-SubCell"/>
</dbReference>
<dbReference type="GO" id="GO:0000271">
    <property type="term" value="P:polysaccharide biosynthetic process"/>
    <property type="evidence" value="ECO:0007669"/>
    <property type="project" value="InterPro"/>
</dbReference>
<dbReference type="InterPro" id="IPR051401">
    <property type="entry name" value="GtrA_CellWall_Glycosyl"/>
</dbReference>
<dbReference type="InterPro" id="IPR007267">
    <property type="entry name" value="GtrA_DPMS_TM"/>
</dbReference>
<dbReference type="PANTHER" id="PTHR38459:SF5">
    <property type="entry name" value="CELL WALL TEICHOIC ACID GLYCOSYLATION PROTEIN GTCA"/>
    <property type="match status" value="1"/>
</dbReference>
<dbReference type="PANTHER" id="PTHR38459">
    <property type="entry name" value="PROPHAGE BACTOPRENOL-LINKED GLUCOSE TRANSLOCASE HOMOLOG"/>
    <property type="match status" value="1"/>
</dbReference>
<dbReference type="Pfam" id="PF04138">
    <property type="entry name" value="GtrA_DPMS_TM"/>
    <property type="match status" value="1"/>
</dbReference>
<reference key="1">
    <citation type="journal article" date="1999" name="J. Bacteriol.">
        <title>Cell wall teichoic acid glycosylation in Listeria monocytogenes serotype 4b requires gtcA, a novel, serogroup-specific gene.</title>
        <authorList>
            <person name="Promadej N."/>
            <person name="Fiedler F."/>
            <person name="Cossart P."/>
            <person name="Dramsi S."/>
            <person name="Kathariou S."/>
        </authorList>
    </citation>
    <scope>NUCLEOTIDE SEQUENCE [GENOMIC DNA]</scope>
    <source>
        <strain>4b1 / Serotype 4b</strain>
    </source>
</reference>
<evidence type="ECO:0000255" key="1"/>
<evidence type="ECO:0000305" key="2"/>
<accession>Q9ZH29</accession>
<comment type="function">
    <text>Involved in the decoration of cell wall teichoic acid with galactose and glucose.</text>
</comment>
<comment type="subcellular location">
    <subcellularLocation>
        <location evidence="2">Cell membrane</location>
        <topology evidence="2">Multi-pass membrane protein</topology>
    </subcellularLocation>
</comment>
<comment type="similarity">
    <text evidence="2">Belongs to the GtrA family.</text>
</comment>
<protein>
    <recommendedName>
        <fullName>Cell wall teichoic acid glycosylation protein GtcA</fullName>
    </recommendedName>
</protein>
<name>GTCA_LISMN</name>
<feature type="chain" id="PRO_0000212255" description="Cell wall teichoic acid glycosylation protein GtcA">
    <location>
        <begin position="1"/>
        <end position="145"/>
    </location>
</feature>
<feature type="transmembrane region" description="Helical" evidence="1">
    <location>
        <begin position="21"/>
        <end position="41"/>
    </location>
</feature>
<feature type="transmembrane region" description="Helical" evidence="1">
    <location>
        <begin position="45"/>
        <end position="65"/>
    </location>
</feature>
<feature type="transmembrane region" description="Helical" evidence="1">
    <location>
        <begin position="91"/>
        <end position="111"/>
    </location>
</feature>
<feature type="transmembrane region" description="Helical" evidence="1">
    <location>
        <begin position="122"/>
        <end position="142"/>
    </location>
</feature>
<gene>
    <name type="primary">gtcA</name>
</gene>